<proteinExistence type="evidence at protein level"/>
<comment type="subcellular location">
    <subcellularLocation>
        <location>Cell inner membrane</location>
        <topology>Multi-pass membrane protein</topology>
    </subcellularLocation>
</comment>
<comment type="sequence caution" evidence="2">
    <conflict type="frameshift">
        <sequence resource="EMBL-CDS" id="AAA97154"/>
    </conflict>
</comment>
<evidence type="ECO:0000255" key="1"/>
<evidence type="ECO:0000305" key="2"/>
<accession>P39338</accession>
<accession>P39339</accession>
<accession>P76811</accession>
<accession>Q2M652</accession>
<accession>Q6BEW8</accession>
<name>YJGN_ECOLI</name>
<keyword id="KW-0997">Cell inner membrane</keyword>
<keyword id="KW-1003">Cell membrane</keyword>
<keyword id="KW-0472">Membrane</keyword>
<keyword id="KW-1185">Reference proteome</keyword>
<keyword id="KW-0812">Transmembrane</keyword>
<keyword id="KW-1133">Transmembrane helix</keyword>
<reference key="1">
    <citation type="journal article" date="1995" name="Nucleic Acids Res.">
        <title>Analysis of the Escherichia coli genome VI: DNA sequence of the region from 92.8 through 100 minutes.</title>
        <authorList>
            <person name="Burland V.D."/>
            <person name="Plunkett G. III"/>
            <person name="Sofia H.J."/>
            <person name="Daniels D.L."/>
            <person name="Blattner F.R."/>
        </authorList>
    </citation>
    <scope>NUCLEOTIDE SEQUENCE [LARGE SCALE GENOMIC DNA]</scope>
    <source>
        <strain>K12 / MG1655 / ATCC 47076</strain>
    </source>
</reference>
<reference key="2">
    <citation type="journal article" date="1997" name="Science">
        <title>The complete genome sequence of Escherichia coli K-12.</title>
        <authorList>
            <person name="Blattner F.R."/>
            <person name="Plunkett G. III"/>
            <person name="Bloch C.A."/>
            <person name="Perna N.T."/>
            <person name="Burland V."/>
            <person name="Riley M."/>
            <person name="Collado-Vides J."/>
            <person name="Glasner J.D."/>
            <person name="Rode C.K."/>
            <person name="Mayhew G.F."/>
            <person name="Gregor J."/>
            <person name="Davis N.W."/>
            <person name="Kirkpatrick H.A."/>
            <person name="Goeden M.A."/>
            <person name="Rose D.J."/>
            <person name="Mau B."/>
            <person name="Shao Y."/>
        </authorList>
    </citation>
    <scope>NUCLEOTIDE SEQUENCE [LARGE SCALE GENOMIC DNA]</scope>
    <source>
        <strain>K12 / MG1655 / ATCC 47076</strain>
    </source>
</reference>
<reference key="3">
    <citation type="journal article" date="2006" name="Nucleic Acids Res.">
        <title>Escherichia coli K-12: a cooperatively developed annotation snapshot -- 2005.</title>
        <authorList>
            <person name="Riley M."/>
            <person name="Abe T."/>
            <person name="Arnaud M.B."/>
            <person name="Berlyn M.K.B."/>
            <person name="Blattner F.R."/>
            <person name="Chaudhuri R.R."/>
            <person name="Glasner J.D."/>
            <person name="Horiuchi T."/>
            <person name="Keseler I.M."/>
            <person name="Kosuge T."/>
            <person name="Mori H."/>
            <person name="Perna N.T."/>
            <person name="Plunkett G. III"/>
            <person name="Rudd K.E."/>
            <person name="Serres M.H."/>
            <person name="Thomas G.H."/>
            <person name="Thomson N.R."/>
            <person name="Wishart D."/>
            <person name="Wanner B.L."/>
        </authorList>
    </citation>
    <scope>SEQUENCE REVISION</scope>
</reference>
<reference key="4">
    <citation type="journal article" date="2006" name="Mol. Syst. Biol.">
        <title>Highly accurate genome sequences of Escherichia coli K-12 strains MG1655 and W3110.</title>
        <authorList>
            <person name="Hayashi K."/>
            <person name="Morooka N."/>
            <person name="Yamamoto Y."/>
            <person name="Fujita K."/>
            <person name="Isono K."/>
            <person name="Choi S."/>
            <person name="Ohtsubo E."/>
            <person name="Baba T."/>
            <person name="Wanner B.L."/>
            <person name="Mori H."/>
            <person name="Horiuchi T."/>
        </authorList>
    </citation>
    <scope>NUCLEOTIDE SEQUENCE [LARGE SCALE GENOMIC DNA]</scope>
    <source>
        <strain>K12 / W3110 / ATCC 27325 / DSM 5911</strain>
    </source>
</reference>
<reference key="5">
    <citation type="journal article" date="2005" name="Science">
        <title>Global topology analysis of the Escherichia coli inner membrane proteome.</title>
        <authorList>
            <person name="Daley D.O."/>
            <person name="Rapp M."/>
            <person name="Granseth E."/>
            <person name="Melen K."/>
            <person name="Drew D."/>
            <person name="von Heijne G."/>
        </authorList>
    </citation>
    <scope>TOPOLOGY [LARGE SCALE ANALYSIS]</scope>
    <source>
        <strain>K12 / MG1655 / ATCC 47076</strain>
    </source>
</reference>
<organism>
    <name type="scientific">Escherichia coli (strain K12)</name>
    <dbReference type="NCBI Taxonomy" id="83333"/>
    <lineage>
        <taxon>Bacteria</taxon>
        <taxon>Pseudomonadati</taxon>
        <taxon>Pseudomonadota</taxon>
        <taxon>Gammaproteobacteria</taxon>
        <taxon>Enterobacterales</taxon>
        <taxon>Enterobacteriaceae</taxon>
        <taxon>Escherichia</taxon>
    </lineage>
</organism>
<gene>
    <name type="primary">yjgN</name>
    <name type="ordered locus">b4257</name>
    <name type="ordered locus">JW5759</name>
</gene>
<sequence>MAQVINEMDVPSHSFVFHGTGERYFLICVVNVLLTIITLGIYLPWALMKCKRYLYANMEVNGQRFSYGITGGNVFVSCLFFVFFYFAILMTVSADMPLVGCVLTLLLLVLLIFMAAKGLRHQALMTSLNGVRFSFNCSMKGFWWVTFFLPILMAIGMGTVFFISTKMLPANSSSSVIISMVLMAIVGIVSIGIFNGTLYSLVMSFLWSNTSFGIHRFKVKLDTTYCIKYAILAFLALLPFLAVAGYIIFDQILNAYDSSVYANDDIENLQQFMEMQRKMIIAQLIYYFGIAVSTSYLTVSLRNHFMSNLSLNDGRIRFRLTLTYHGMLYRMCALVVISGITGGLAYPLLKIWMIDWQAKNTYLLGDLDDLPLINKEEQPDKGFLASISRGVMPSLPFL</sequence>
<dbReference type="EMBL" id="U14003">
    <property type="protein sequence ID" value="AAA97153.1"/>
    <property type="status" value="ALT_FRAME"/>
    <property type="molecule type" value="Genomic_DNA"/>
</dbReference>
<dbReference type="EMBL" id="U14003">
    <property type="protein sequence ID" value="AAA97154.1"/>
    <property type="status" value="ALT_FRAME"/>
    <property type="molecule type" value="Genomic_DNA"/>
</dbReference>
<dbReference type="EMBL" id="U00096">
    <property type="protein sequence ID" value="AAT48246.1"/>
    <property type="molecule type" value="Genomic_DNA"/>
</dbReference>
<dbReference type="EMBL" id="AP009048">
    <property type="protein sequence ID" value="BAE78254.1"/>
    <property type="molecule type" value="Genomic_DNA"/>
</dbReference>
<dbReference type="PIR" id="D65238">
    <property type="entry name" value="D65238"/>
</dbReference>
<dbReference type="PIR" id="S56482">
    <property type="entry name" value="S56482"/>
</dbReference>
<dbReference type="RefSeq" id="WP_000079634.1">
    <property type="nucleotide sequence ID" value="NZ_LN832404.1"/>
</dbReference>
<dbReference type="RefSeq" id="YP_026288.1">
    <property type="nucleotide sequence ID" value="NC_000913.3"/>
</dbReference>
<dbReference type="BioGRID" id="4263245">
    <property type="interactions" value="4"/>
</dbReference>
<dbReference type="FunCoup" id="P39338">
    <property type="interactions" value="39"/>
</dbReference>
<dbReference type="STRING" id="511145.b4257"/>
<dbReference type="TCDB" id="9.B.318.1.1">
    <property type="family name" value="the yjgj or duf898 (duf898) family"/>
</dbReference>
<dbReference type="PaxDb" id="511145-b4257"/>
<dbReference type="EnsemblBacteria" id="AAT48246">
    <property type="protein sequence ID" value="AAT48246"/>
    <property type="gene ID" value="b4257"/>
</dbReference>
<dbReference type="GeneID" id="948784"/>
<dbReference type="KEGG" id="ecj:JW5759"/>
<dbReference type="KEGG" id="eco:b4257"/>
<dbReference type="KEGG" id="ecoc:C3026_22965"/>
<dbReference type="PATRIC" id="fig|1411691.4.peg.2447"/>
<dbReference type="EchoBASE" id="EB2423"/>
<dbReference type="eggNOG" id="COG4269">
    <property type="taxonomic scope" value="Bacteria"/>
</dbReference>
<dbReference type="HOGENOM" id="CLU_049287_2_0_6"/>
<dbReference type="InParanoid" id="P39338"/>
<dbReference type="OMA" id="EYFRIWI"/>
<dbReference type="OrthoDB" id="9765721at2"/>
<dbReference type="PhylomeDB" id="P39338"/>
<dbReference type="BioCyc" id="EcoCyc:G7887-MONOMER"/>
<dbReference type="PRO" id="PR:P39338"/>
<dbReference type="Proteomes" id="UP000000625">
    <property type="component" value="Chromosome"/>
</dbReference>
<dbReference type="GO" id="GO:0005886">
    <property type="term" value="C:plasma membrane"/>
    <property type="evidence" value="ECO:0000314"/>
    <property type="project" value="EcoCyc"/>
</dbReference>
<dbReference type="InterPro" id="IPR010295">
    <property type="entry name" value="DUF898"/>
</dbReference>
<dbReference type="Pfam" id="PF05987">
    <property type="entry name" value="DUF898"/>
    <property type="match status" value="1"/>
</dbReference>
<feature type="chain" id="PRO_0000169768" description="Inner membrane protein YjgN">
    <location>
        <begin position="1"/>
        <end position="398"/>
    </location>
</feature>
<feature type="topological domain" description="Cytoplasmic" evidence="1">
    <location>
        <begin position="1"/>
        <end position="24"/>
    </location>
</feature>
<feature type="transmembrane region" description="Helical" evidence="1">
    <location>
        <begin position="25"/>
        <end position="45"/>
    </location>
</feature>
<feature type="topological domain" description="Periplasmic" evidence="1">
    <location>
        <begin position="46"/>
        <end position="73"/>
    </location>
</feature>
<feature type="transmembrane region" description="Helical" evidence="1">
    <location>
        <begin position="74"/>
        <end position="94"/>
    </location>
</feature>
<feature type="topological domain" description="Cytoplasmic" evidence="1">
    <location>
        <position position="95"/>
    </location>
</feature>
<feature type="transmembrane region" description="Helical" evidence="1">
    <location>
        <begin position="96"/>
        <end position="116"/>
    </location>
</feature>
<feature type="topological domain" description="Periplasmic" evidence="1">
    <location>
        <begin position="117"/>
        <end position="142"/>
    </location>
</feature>
<feature type="transmembrane region" description="Helical" evidence="1">
    <location>
        <begin position="143"/>
        <end position="163"/>
    </location>
</feature>
<feature type="topological domain" description="Cytoplasmic" evidence="1">
    <location>
        <begin position="164"/>
        <end position="175"/>
    </location>
</feature>
<feature type="transmembrane region" description="Helical" evidence="1">
    <location>
        <begin position="176"/>
        <end position="196"/>
    </location>
</feature>
<feature type="topological domain" description="Periplasmic" evidence="1">
    <location>
        <begin position="197"/>
        <end position="228"/>
    </location>
</feature>
<feature type="transmembrane region" description="Helical" evidence="1">
    <location>
        <begin position="229"/>
        <end position="249"/>
    </location>
</feature>
<feature type="topological domain" description="Cytoplasmic" evidence="1">
    <location>
        <begin position="250"/>
        <end position="278"/>
    </location>
</feature>
<feature type="transmembrane region" description="Helical" evidence="1">
    <location>
        <begin position="279"/>
        <end position="299"/>
    </location>
</feature>
<feature type="topological domain" description="Periplasmic" evidence="1">
    <location>
        <begin position="300"/>
        <end position="333"/>
    </location>
</feature>
<feature type="transmembrane region" description="Helical" evidence="1">
    <location>
        <begin position="334"/>
        <end position="354"/>
    </location>
</feature>
<feature type="topological domain" description="Cytoplasmic" evidence="1">
    <location>
        <begin position="355"/>
        <end position="398"/>
    </location>
</feature>
<protein>
    <recommendedName>
        <fullName>Inner membrane protein YjgN</fullName>
    </recommendedName>
</protein>